<proteinExistence type="evidence at protein level"/>
<organism>
    <name type="scientific">Bos taurus</name>
    <name type="common">Bovine</name>
    <dbReference type="NCBI Taxonomy" id="9913"/>
    <lineage>
        <taxon>Eukaryota</taxon>
        <taxon>Metazoa</taxon>
        <taxon>Chordata</taxon>
        <taxon>Craniata</taxon>
        <taxon>Vertebrata</taxon>
        <taxon>Euteleostomi</taxon>
        <taxon>Mammalia</taxon>
        <taxon>Eutheria</taxon>
        <taxon>Laurasiatheria</taxon>
        <taxon>Artiodactyla</taxon>
        <taxon>Ruminantia</taxon>
        <taxon>Pecora</taxon>
        <taxon>Bovidae</taxon>
        <taxon>Bovinae</taxon>
        <taxon>Bos</taxon>
    </lineage>
</organism>
<feature type="initiator methionine" description="Removed" evidence="2">
    <location>
        <position position="1"/>
    </location>
</feature>
<feature type="chain" id="PRO_0000159708" description="Phenylethanolamine N-methyltransferase">
    <location>
        <begin position="2"/>
        <end position="283"/>
    </location>
</feature>
<feature type="binding site" evidence="2">
    <location>
        <position position="35"/>
    </location>
    <ligand>
        <name>S-adenosyl-L-methionine</name>
        <dbReference type="ChEBI" id="CHEBI:59789"/>
    </ligand>
</feature>
<feature type="binding site" evidence="2">
    <location>
        <position position="40"/>
    </location>
    <ligand>
        <name>S-adenosyl-L-methionine</name>
        <dbReference type="ChEBI" id="CHEBI:59789"/>
    </ligand>
</feature>
<feature type="binding site" evidence="2">
    <location>
        <begin position="79"/>
        <end position="80"/>
    </location>
    <ligand>
        <name>S-adenosyl-L-methionine</name>
        <dbReference type="ChEBI" id="CHEBI:59789"/>
    </ligand>
</feature>
<feature type="binding site" evidence="2">
    <location>
        <position position="85"/>
    </location>
    <ligand>
        <name>S-adenosyl-L-methionine</name>
        <dbReference type="ChEBI" id="CHEBI:59789"/>
    </ligand>
</feature>
<feature type="binding site" evidence="2">
    <location>
        <position position="101"/>
    </location>
    <ligand>
        <name>S-adenosyl-L-methionine</name>
        <dbReference type="ChEBI" id="CHEBI:59789"/>
    </ligand>
</feature>
<feature type="binding site" evidence="2">
    <location>
        <position position="106"/>
    </location>
    <ligand>
        <name>S-adenosyl-L-methionine</name>
        <dbReference type="ChEBI" id="CHEBI:59789"/>
    </ligand>
</feature>
<feature type="binding site" evidence="2">
    <location>
        <begin position="158"/>
        <end position="159"/>
    </location>
    <ligand>
        <name>S-adenosyl-L-methionine</name>
        <dbReference type="ChEBI" id="CHEBI:59789"/>
    </ligand>
</feature>
<feature type="binding site" evidence="2">
    <location>
        <position position="181"/>
    </location>
    <ligand>
        <name>S-adenosyl-L-methionine</name>
        <dbReference type="ChEBI" id="CHEBI:59789"/>
    </ligand>
</feature>
<feature type="binding site" evidence="2">
    <location>
        <position position="219"/>
    </location>
    <ligand>
        <name>octopamine</name>
        <dbReference type="ChEBI" id="CHEBI:58025"/>
    </ligand>
</feature>
<feature type="binding site" evidence="2">
    <location>
        <position position="267"/>
    </location>
    <ligand>
        <name>octopamine</name>
        <dbReference type="ChEBI" id="CHEBI:58025"/>
    </ligand>
</feature>
<feature type="modified residue" description="Phosphoserine" evidence="2">
    <location>
        <position position="7"/>
    </location>
</feature>
<feature type="sequence conflict" description="In Ref. 1; AAA30715." evidence="6" ref="1">
    <original>TAT</original>
    <variation>SAM</variation>
    <location>
        <begin position="246"/>
        <end position="248"/>
    </location>
</feature>
<feature type="sequence conflict" description="In Ref. 1; AAA30715." evidence="6" ref="1">
    <original>RTPMPAHLQTGVDDVKGIFFTR</original>
    <variation>LHLHHACPPSDRCRRCQGHLLHL</variation>
    <location>
        <begin position="255"/>
        <end position="276"/>
    </location>
</feature>
<protein>
    <recommendedName>
        <fullName>Phenylethanolamine N-methyltransferase</fullName>
        <shortName>PNMTase</shortName>
        <ecNumber evidence="5">2.1.1.28</ecNumber>
    </recommendedName>
    <alternativeName>
        <fullName>Noradrenaline N-methyltransferase</fullName>
    </alternativeName>
</protein>
<gene>
    <name type="primary">PNMT</name>
</gene>
<evidence type="ECO:0000250" key="1">
    <source>
        <dbReference type="UniProtKB" id="P10937"/>
    </source>
</evidence>
<evidence type="ECO:0000250" key="2">
    <source>
        <dbReference type="UniProtKB" id="P11086"/>
    </source>
</evidence>
<evidence type="ECO:0000269" key="3">
    <source>
    </source>
</evidence>
<evidence type="ECO:0000269" key="4">
    <source>
    </source>
</evidence>
<evidence type="ECO:0000269" key="5">
    <source>
    </source>
</evidence>
<evidence type="ECO:0000305" key="6"/>
<evidence type="ECO:0000305" key="7">
    <source>
    </source>
</evidence>
<sequence>MSGTDRSQAAGAVPDSDPGLAAVSSAYQRFEPRAYLRNNYAPPRGDLSCPDGVGPWKLRCLAQTFATGEVSGRTLIDIGSGPTIYQLLSACAHFEDITMTDFLEVNRQELRLWLREEPGAFDWSVYSQHVCLIEGKGESWQEKECQLRARVKRILPIDVHRPQPLGAGGLAPLPADALVSAFCLEAVSPDLASFQRALDHITTLLRPGGHLLLIGALEESWYLAGEARLAVVPVREEEVREALVRTATRCGICARTPMPAHLQTGVDDVKGIFFTRAQKKVGV</sequence>
<name>PNMT_BOVIN</name>
<keyword id="KW-0127">Catecholamine biosynthesis</keyword>
<keyword id="KW-0903">Direct protein sequencing</keyword>
<keyword id="KW-0489">Methyltransferase</keyword>
<keyword id="KW-0597">Phosphoprotein</keyword>
<keyword id="KW-1185">Reference proteome</keyword>
<keyword id="KW-0949">S-adenosyl-L-methionine</keyword>
<keyword id="KW-0808">Transferase</keyword>
<dbReference type="EC" id="2.1.1.28" evidence="5"/>
<dbReference type="EMBL" id="M36706">
    <property type="protein sequence ID" value="AAA30716.1"/>
    <property type="molecule type" value="Genomic_DNA"/>
</dbReference>
<dbReference type="EMBL" id="M14318">
    <property type="protein sequence ID" value="AAA30715.1"/>
    <property type="molecule type" value="mRNA"/>
</dbReference>
<dbReference type="PIR" id="A24313">
    <property type="entry name" value="A24313"/>
</dbReference>
<dbReference type="PIR" id="I45962">
    <property type="entry name" value="I45962"/>
</dbReference>
<dbReference type="SMR" id="P10938"/>
<dbReference type="FunCoup" id="P10938">
    <property type="interactions" value="43"/>
</dbReference>
<dbReference type="STRING" id="9913.ENSBTAP00000055240"/>
<dbReference type="BindingDB" id="P10938"/>
<dbReference type="ChEMBL" id="CHEMBL2331"/>
<dbReference type="PaxDb" id="9913-ENSBTAP00000055240"/>
<dbReference type="eggNOG" id="ENOG502QT44">
    <property type="taxonomic scope" value="Eukaryota"/>
</dbReference>
<dbReference type="InParanoid" id="P10938"/>
<dbReference type="OrthoDB" id="10050085at2759"/>
<dbReference type="UniPathway" id="UPA00749">
    <property type="reaction ID" value="UER00736"/>
</dbReference>
<dbReference type="Proteomes" id="UP000009136">
    <property type="component" value="Unplaced"/>
</dbReference>
<dbReference type="GO" id="GO:0005829">
    <property type="term" value="C:cytosol"/>
    <property type="evidence" value="ECO:0000318"/>
    <property type="project" value="GO_Central"/>
</dbReference>
<dbReference type="GO" id="GO:0004603">
    <property type="term" value="F:phenylethanolamine N-methyltransferase activity"/>
    <property type="evidence" value="ECO:0000314"/>
    <property type="project" value="UniProtKB"/>
</dbReference>
<dbReference type="GO" id="GO:0042418">
    <property type="term" value="P:epinephrine biosynthetic process"/>
    <property type="evidence" value="ECO:0007669"/>
    <property type="project" value="UniProtKB-UniPathway"/>
</dbReference>
<dbReference type="GO" id="GO:0032259">
    <property type="term" value="P:methylation"/>
    <property type="evidence" value="ECO:0007669"/>
    <property type="project" value="UniProtKB-KW"/>
</dbReference>
<dbReference type="FunFam" id="3.40.50.150:FF:000065">
    <property type="entry name" value="Phenylethanolamine N-methyltransferase"/>
    <property type="match status" value="1"/>
</dbReference>
<dbReference type="Gene3D" id="3.40.50.150">
    <property type="entry name" value="Vaccinia Virus protein VP39"/>
    <property type="match status" value="1"/>
</dbReference>
<dbReference type="InterPro" id="IPR025820">
    <property type="entry name" value="NNMT/PNMT/TEMT_CS"/>
</dbReference>
<dbReference type="InterPro" id="IPR000940">
    <property type="entry name" value="NNMT_TEMT_trans"/>
</dbReference>
<dbReference type="InterPro" id="IPR053384">
    <property type="entry name" value="SAM-dep_methyltransferase"/>
</dbReference>
<dbReference type="InterPro" id="IPR029063">
    <property type="entry name" value="SAM-dependent_MTases_sf"/>
</dbReference>
<dbReference type="NCBIfam" id="NF041360">
    <property type="entry name" value="GntF_guanitoxin"/>
    <property type="match status" value="1"/>
</dbReference>
<dbReference type="PANTHER" id="PTHR10867">
    <property type="entry name" value="NNMT/PNMT/TEMT FAMILY MEMBER"/>
    <property type="match status" value="1"/>
</dbReference>
<dbReference type="PANTHER" id="PTHR10867:SF18">
    <property type="entry name" value="PHENYLETHANOLAMINE N-METHYLTRANSFERASE"/>
    <property type="match status" value="1"/>
</dbReference>
<dbReference type="Pfam" id="PF01234">
    <property type="entry name" value="NNMT_PNMT_TEMT"/>
    <property type="match status" value="1"/>
</dbReference>
<dbReference type="PIRSF" id="PIRSF000384">
    <property type="entry name" value="PNMTase"/>
    <property type="match status" value="1"/>
</dbReference>
<dbReference type="SUPFAM" id="SSF53335">
    <property type="entry name" value="S-adenosyl-L-methionine-dependent methyltransferases"/>
    <property type="match status" value="1"/>
</dbReference>
<dbReference type="PROSITE" id="PS01100">
    <property type="entry name" value="NNMT_PNMT_TEMT"/>
    <property type="match status" value="1"/>
</dbReference>
<dbReference type="PROSITE" id="PS51681">
    <property type="entry name" value="SAM_MT_NNMT_PNMT_TEMT"/>
    <property type="match status" value="1"/>
</dbReference>
<accession>P10938</accession>
<comment type="function">
    <text evidence="2 3 5">Catalyzes the transmethylation of nonepinephrine (noradrenaline) to form epinephrine (adrenaline), using S-adenosyl-L-methionine as the methyl donor (PubMed:5412063). Other substrates include phenylethanolamine and octopamine (By similarity). Also methylates normetanephrine (PubMed:13863458, PubMed:5412063).</text>
</comment>
<comment type="catalytic activity">
    <reaction evidence="2">
        <text>phenylethanolamine + S-adenosyl-L-methionine = N-methylphenylethanolamine + S-adenosyl-L-homocysteine + H(+)</text>
        <dbReference type="Rhea" id="RHEA:12176"/>
        <dbReference type="ChEBI" id="CHEBI:15378"/>
        <dbReference type="ChEBI" id="CHEBI:57741"/>
        <dbReference type="ChEBI" id="CHEBI:57856"/>
        <dbReference type="ChEBI" id="CHEBI:57946"/>
        <dbReference type="ChEBI" id="CHEBI:59789"/>
        <dbReference type="EC" id="2.1.1.28"/>
    </reaction>
    <physiologicalReaction direction="left-to-right" evidence="2">
        <dbReference type="Rhea" id="RHEA:12177"/>
    </physiologicalReaction>
</comment>
<comment type="catalytic activity">
    <reaction evidence="5">
        <text>(R)-noradrenaline + S-adenosyl-L-methionine = (R)-adrenaline + S-adenosyl-L-homocysteine + H(+)</text>
        <dbReference type="Rhea" id="RHEA:25269"/>
        <dbReference type="ChEBI" id="CHEBI:15378"/>
        <dbReference type="ChEBI" id="CHEBI:57856"/>
        <dbReference type="ChEBI" id="CHEBI:59789"/>
        <dbReference type="ChEBI" id="CHEBI:71406"/>
        <dbReference type="ChEBI" id="CHEBI:72587"/>
        <dbReference type="EC" id="2.1.1.28"/>
    </reaction>
    <physiologicalReaction direction="left-to-right" evidence="5">
        <dbReference type="Rhea" id="RHEA:25270"/>
    </physiologicalReaction>
</comment>
<comment type="catalytic activity">
    <reaction evidence="3 5">
        <text>(R)-normetanephrine + S-adenosyl-L-methionine = (R)-metanephrine + S-adenosyl-L-homocysteine + H(+)</text>
        <dbReference type="Rhea" id="RHEA:70683"/>
        <dbReference type="ChEBI" id="CHEBI:15378"/>
        <dbReference type="ChEBI" id="CHEBI:57856"/>
        <dbReference type="ChEBI" id="CHEBI:59789"/>
        <dbReference type="ChEBI" id="CHEBI:189645"/>
        <dbReference type="ChEBI" id="CHEBI:189646"/>
    </reaction>
    <physiologicalReaction direction="left-to-right" evidence="7">
        <dbReference type="Rhea" id="RHEA:70684"/>
    </physiologicalReaction>
</comment>
<comment type="catalytic activity">
    <reaction evidence="1">
        <text>(R)-octopamine + S-adenosyl-L-methionine = (R)-synephrine + S-adenosyl-L-homocysteine + H(+)</text>
        <dbReference type="Rhea" id="RHEA:70519"/>
        <dbReference type="ChEBI" id="CHEBI:15378"/>
        <dbReference type="ChEBI" id="CHEBI:57856"/>
        <dbReference type="ChEBI" id="CHEBI:59789"/>
        <dbReference type="ChEBI" id="CHEBI:63694"/>
        <dbReference type="ChEBI" id="CHEBI:141486"/>
    </reaction>
    <physiologicalReaction direction="left-to-right" evidence="1">
        <dbReference type="Rhea" id="RHEA:70520"/>
    </physiologicalReaction>
</comment>
<comment type="activity regulation">
    <text evidence="5">Inhibited by p-hydroxymercuribenzoate and p-chloromercuriphenylsulfonate.</text>
</comment>
<comment type="biophysicochemical properties">
    <phDependence>
        <text evidence="5">Optimum pH is 7.9.</text>
    </phDependence>
</comment>
<comment type="pathway">
    <text evidence="5">Catecholamine biosynthesis; (R)-adrenaline biosynthesis; (R)-adrenaline from (R)-noradrenaline: step 1/1.</text>
</comment>
<comment type="tissue specificity">
    <text evidence="3">Expressed in the adrenal medulla.</text>
</comment>
<comment type="PTM">
    <text evidence="4">The N-terminus is blocked.</text>
</comment>
<comment type="similarity">
    <text evidence="6">Belongs to the class I-like SAM-binding methyltransferase superfamily. NNMT/PNMT/TEMT family.</text>
</comment>
<reference key="1">
    <citation type="journal article" date="1986" name="Proc. Natl. Acad. Sci. U.S.A.">
        <title>Complete nucleotide and deduced amino acid sequence of bovine phenylethanolamine N-methyltransferase: partial amino acid homology with rat tyrosine hydroxylase.</title>
        <authorList>
            <person name="Baetge E.E."/>
            <person name="Suh Y.H."/>
            <person name="Joh T.H."/>
        </authorList>
    </citation>
    <scope>NUCLEOTIDE SEQUENCE [MRNA]</scope>
</reference>
<reference key="2">
    <citation type="journal article" date="1988" name="J. Neurosci. Res.">
        <title>The complete nucleotide sequence and structure of the gene encoding bovine phenylethanolamine N-methyltransferase.</title>
        <authorList>
            <person name="Batter D.K."/>
            <person name="D'Mello S.R."/>
            <person name="Turzai L.M."/>
            <person name="Hughes H.B. III"/>
            <person name="Gioio A.E."/>
            <person name="Kaplan B.B."/>
        </authorList>
    </citation>
    <scope>NUCLEOTIDE SEQUENCE [GENOMIC DNA]</scope>
</reference>
<reference key="3">
    <citation type="journal article" date="1988" name="J. Neurosci. Res.">
        <title>Purification and partial amino acid sequence of bovine adrenal phenylethanolamine N-methyltransferase: a comparison of nucleic acid and protein sequence data.</title>
        <authorList>
            <person name="Weisberg E.P."/>
            <person name="Batter D.K."/>
            <person name="Brown W.E."/>
            <person name="Kaplan B.B."/>
        </authorList>
    </citation>
    <scope>PARTIAL PROTEIN SEQUENCE</scope>
</reference>
<reference key="4">
    <citation type="journal article" date="1990" name="Neuropsychopharmacology">
        <title>Primary structure of bovine adrenal phenylethanolamine N-methyltransferase.</title>
        <authorList>
            <person name="Wong D.L."/>
            <person name="Yoo Y.S."/>
            <person name="Lau K."/>
            <person name="Schilling J.W."/>
        </authorList>
    </citation>
    <scope>PARTIAL PROTEIN SEQUENCE</scope>
    <scope>PTM</scope>
</reference>
<reference key="5">
    <citation type="journal article" date="1962" name="J. Biol. Chem.">
        <title>Purification and properties of phenylethanolamine-N-methyl transferase.</title>
        <authorList>
            <person name="Axelrod J."/>
        </authorList>
    </citation>
    <scope>FUNCTION</scope>
    <scope>CATALYTIC ACTIVITY</scope>
    <scope>TISSUE SPECIFICITY</scope>
</reference>
<reference key="6">
    <citation type="journal article" date="1970" name="J. Biol. Chem.">
        <title>Purification and properties of bovine phenylethanolamine N-methyltransferase.</title>
        <authorList>
            <person name="Connett R.J."/>
            <person name="Kirshner N."/>
        </authorList>
    </citation>
    <scope>FUNCTION</scope>
    <scope>CATALYTIC ACTIVITY</scope>
    <scope>BIOPHYSICOCHEMICAL PROPERTIES</scope>
    <scope>ACTIVITY REGULATION</scope>
    <scope>PATHWAY</scope>
</reference>